<feature type="chain" id="PRO_1000072618" description="Deoxyribose-phosphate aldolase">
    <location>
        <begin position="1"/>
        <end position="258"/>
    </location>
</feature>
<feature type="active site" description="Proton donor/acceptor" evidence="1">
    <location>
        <position position="102"/>
    </location>
</feature>
<feature type="active site" description="Schiff-base intermediate with acetaldehyde" evidence="1">
    <location>
        <position position="165"/>
    </location>
</feature>
<feature type="active site" description="Proton donor/acceptor" evidence="1">
    <location>
        <position position="199"/>
    </location>
</feature>
<reference key="1">
    <citation type="submission" date="2007-08" db="EMBL/GenBank/DDBJ databases">
        <authorList>
            <consortium name="The Vibrio harveyi Genome Sequencing Project"/>
            <person name="Bassler B."/>
            <person name="Clifton S.W."/>
            <person name="Fulton L."/>
            <person name="Delehaunty K."/>
            <person name="Fronick C."/>
            <person name="Harrison M."/>
            <person name="Markivic C."/>
            <person name="Fulton R."/>
            <person name="Tin-Wollam A.-M."/>
            <person name="Shah N."/>
            <person name="Pepin K."/>
            <person name="Nash W."/>
            <person name="Thiruvilangam P."/>
            <person name="Bhonagiri V."/>
            <person name="Waters C."/>
            <person name="Tu K.C."/>
            <person name="Irgon J."/>
            <person name="Wilson R.K."/>
        </authorList>
    </citation>
    <scope>NUCLEOTIDE SEQUENCE [LARGE SCALE GENOMIC DNA]</scope>
    <source>
        <strain>ATCC BAA-1116 / BB120</strain>
    </source>
</reference>
<evidence type="ECO:0000255" key="1">
    <source>
        <dbReference type="HAMAP-Rule" id="MF_00592"/>
    </source>
</evidence>
<proteinExistence type="inferred from homology"/>
<gene>
    <name evidence="1" type="primary">deoC</name>
    <name type="ordered locus">VIBHAR_03377</name>
</gene>
<keyword id="KW-0963">Cytoplasm</keyword>
<keyword id="KW-0456">Lyase</keyword>
<keyword id="KW-0704">Schiff base</keyword>
<organism>
    <name type="scientific">Vibrio campbellii (strain ATCC BAA-1116)</name>
    <dbReference type="NCBI Taxonomy" id="2902295"/>
    <lineage>
        <taxon>Bacteria</taxon>
        <taxon>Pseudomonadati</taxon>
        <taxon>Pseudomonadota</taxon>
        <taxon>Gammaproteobacteria</taxon>
        <taxon>Vibrionales</taxon>
        <taxon>Vibrionaceae</taxon>
        <taxon>Vibrio</taxon>
    </lineage>
</organism>
<sequence>MSDLKAAALRALKLMDLTTLNDDDTDAKVISLCHDAKSAVGNTAAICIYPRFIPIAKKTLREQGTPEVRIATVTNFPHGNDDIEIAVAETKAAVAYGADEVDVVFPYRALMAGDEKVGFELVKQCKEACGDILLKVIIETGELKEEALIKKASQICIEAGADFIKTSTGKVPVNATPEYARMMLEVIRDMGVAETVGFKPAGGVRTAEDAAAYLAMADEILGDNWVDARHYRFGASSLLTNLLNTLEVSDEVADPAAY</sequence>
<dbReference type="EC" id="4.1.2.4" evidence="1"/>
<dbReference type="EMBL" id="CP000789">
    <property type="protein sequence ID" value="ABU72324.1"/>
    <property type="molecule type" value="Genomic_DNA"/>
</dbReference>
<dbReference type="RefSeq" id="WP_005530303.1">
    <property type="nucleotide sequence ID" value="NC_022269.1"/>
</dbReference>
<dbReference type="SMR" id="A7MUW7"/>
<dbReference type="GeneID" id="67376403"/>
<dbReference type="KEGG" id="vha:VIBHAR_03377"/>
<dbReference type="PATRIC" id="fig|338187.25.peg.2820"/>
<dbReference type="UniPathway" id="UPA00002">
    <property type="reaction ID" value="UER00468"/>
</dbReference>
<dbReference type="Proteomes" id="UP000008152">
    <property type="component" value="Chromosome I"/>
</dbReference>
<dbReference type="GO" id="GO:0005737">
    <property type="term" value="C:cytoplasm"/>
    <property type="evidence" value="ECO:0007669"/>
    <property type="project" value="UniProtKB-SubCell"/>
</dbReference>
<dbReference type="GO" id="GO:0004139">
    <property type="term" value="F:deoxyribose-phosphate aldolase activity"/>
    <property type="evidence" value="ECO:0007669"/>
    <property type="project" value="UniProtKB-UniRule"/>
</dbReference>
<dbReference type="GO" id="GO:0006018">
    <property type="term" value="P:2-deoxyribose 1-phosphate catabolic process"/>
    <property type="evidence" value="ECO:0007669"/>
    <property type="project" value="UniProtKB-UniRule"/>
</dbReference>
<dbReference type="GO" id="GO:0016052">
    <property type="term" value="P:carbohydrate catabolic process"/>
    <property type="evidence" value="ECO:0007669"/>
    <property type="project" value="TreeGrafter"/>
</dbReference>
<dbReference type="GO" id="GO:0009264">
    <property type="term" value="P:deoxyribonucleotide catabolic process"/>
    <property type="evidence" value="ECO:0007669"/>
    <property type="project" value="InterPro"/>
</dbReference>
<dbReference type="CDD" id="cd00959">
    <property type="entry name" value="DeoC"/>
    <property type="match status" value="1"/>
</dbReference>
<dbReference type="FunFam" id="3.20.20.70:FF:000034">
    <property type="entry name" value="Deoxyribose-phosphate aldolase"/>
    <property type="match status" value="1"/>
</dbReference>
<dbReference type="Gene3D" id="3.20.20.70">
    <property type="entry name" value="Aldolase class I"/>
    <property type="match status" value="1"/>
</dbReference>
<dbReference type="HAMAP" id="MF_00592">
    <property type="entry name" value="DeoC_type2"/>
    <property type="match status" value="1"/>
</dbReference>
<dbReference type="InterPro" id="IPR013785">
    <property type="entry name" value="Aldolase_TIM"/>
</dbReference>
<dbReference type="InterPro" id="IPR011343">
    <property type="entry name" value="DeoC"/>
</dbReference>
<dbReference type="InterPro" id="IPR002915">
    <property type="entry name" value="DeoC/FbaB/LacD_aldolase"/>
</dbReference>
<dbReference type="InterPro" id="IPR023649">
    <property type="entry name" value="DeoC_typeII"/>
</dbReference>
<dbReference type="NCBIfam" id="TIGR00126">
    <property type="entry name" value="deoC"/>
    <property type="match status" value="1"/>
</dbReference>
<dbReference type="PANTHER" id="PTHR10889">
    <property type="entry name" value="DEOXYRIBOSE-PHOSPHATE ALDOLASE"/>
    <property type="match status" value="1"/>
</dbReference>
<dbReference type="PANTHER" id="PTHR10889:SF3">
    <property type="entry name" value="DEOXYRIBOSE-PHOSPHATE ALDOLASE"/>
    <property type="match status" value="1"/>
</dbReference>
<dbReference type="Pfam" id="PF01791">
    <property type="entry name" value="DeoC"/>
    <property type="match status" value="1"/>
</dbReference>
<dbReference type="PIRSF" id="PIRSF001357">
    <property type="entry name" value="DeoC"/>
    <property type="match status" value="1"/>
</dbReference>
<dbReference type="SMART" id="SM01133">
    <property type="entry name" value="DeoC"/>
    <property type="match status" value="1"/>
</dbReference>
<dbReference type="SUPFAM" id="SSF51569">
    <property type="entry name" value="Aldolase"/>
    <property type="match status" value="1"/>
</dbReference>
<name>DEOC_VIBC1</name>
<comment type="function">
    <text evidence="1">Catalyzes a reversible aldol reaction between acetaldehyde and D-glyceraldehyde 3-phosphate to generate 2-deoxy-D-ribose 5-phosphate.</text>
</comment>
<comment type="catalytic activity">
    <reaction evidence="1">
        <text>2-deoxy-D-ribose 5-phosphate = D-glyceraldehyde 3-phosphate + acetaldehyde</text>
        <dbReference type="Rhea" id="RHEA:12821"/>
        <dbReference type="ChEBI" id="CHEBI:15343"/>
        <dbReference type="ChEBI" id="CHEBI:59776"/>
        <dbReference type="ChEBI" id="CHEBI:62877"/>
        <dbReference type="EC" id="4.1.2.4"/>
    </reaction>
</comment>
<comment type="pathway">
    <text evidence="1">Carbohydrate degradation; 2-deoxy-D-ribose 1-phosphate degradation; D-glyceraldehyde 3-phosphate and acetaldehyde from 2-deoxy-alpha-D-ribose 1-phosphate: step 2/2.</text>
</comment>
<comment type="subcellular location">
    <subcellularLocation>
        <location evidence="1">Cytoplasm</location>
    </subcellularLocation>
</comment>
<comment type="similarity">
    <text evidence="1">Belongs to the DeoC/FbaB aldolase family. DeoC type 2 subfamily.</text>
</comment>
<protein>
    <recommendedName>
        <fullName evidence="1">Deoxyribose-phosphate aldolase</fullName>
        <shortName evidence="1">DERA</shortName>
        <ecNumber evidence="1">4.1.2.4</ecNumber>
    </recommendedName>
    <alternativeName>
        <fullName evidence="1">2-deoxy-D-ribose 5-phosphate aldolase</fullName>
    </alternativeName>
    <alternativeName>
        <fullName evidence="1">Phosphodeoxyriboaldolase</fullName>
        <shortName evidence="1">Deoxyriboaldolase</shortName>
    </alternativeName>
</protein>
<accession>A7MUW7</accession>